<accession>Q58116</accession>
<protein>
    <recommendedName>
        <fullName>3-hydroxy-3-methylglutaryl-coenzyme A reductase</fullName>
        <shortName>HMG-CoA reductase</shortName>
        <ecNumber>1.1.1.34</ecNumber>
    </recommendedName>
</protein>
<gene>
    <name type="primary">hmgA</name>
    <name type="ordered locus">MJ0705</name>
</gene>
<proteinExistence type="inferred from homology"/>
<reference key="1">
    <citation type="journal article" date="1996" name="Science">
        <title>Complete genome sequence of the methanogenic archaeon, Methanococcus jannaschii.</title>
        <authorList>
            <person name="Bult C.J."/>
            <person name="White O."/>
            <person name="Olsen G.J."/>
            <person name="Zhou L."/>
            <person name="Fleischmann R.D."/>
            <person name="Sutton G.G."/>
            <person name="Blake J.A."/>
            <person name="FitzGerald L.M."/>
            <person name="Clayton R.A."/>
            <person name="Gocayne J.D."/>
            <person name="Kerlavage A.R."/>
            <person name="Dougherty B.A."/>
            <person name="Tomb J.-F."/>
            <person name="Adams M.D."/>
            <person name="Reich C.I."/>
            <person name="Overbeek R."/>
            <person name="Kirkness E.F."/>
            <person name="Weinstock K.G."/>
            <person name="Merrick J.M."/>
            <person name="Glodek A."/>
            <person name="Scott J.L."/>
            <person name="Geoghagen N.S.M."/>
            <person name="Weidman J.F."/>
            <person name="Fuhrmann J.L."/>
            <person name="Nguyen D."/>
            <person name="Utterback T.R."/>
            <person name="Kelley J.M."/>
            <person name="Peterson J.D."/>
            <person name="Sadow P.W."/>
            <person name="Hanna M.C."/>
            <person name="Cotton M.D."/>
            <person name="Roberts K.M."/>
            <person name="Hurst M.A."/>
            <person name="Kaine B.P."/>
            <person name="Borodovsky M."/>
            <person name="Klenk H.-P."/>
            <person name="Fraser C.M."/>
            <person name="Smith H.O."/>
            <person name="Woese C.R."/>
            <person name="Venter J.C."/>
        </authorList>
    </citation>
    <scope>NUCLEOTIDE SEQUENCE [LARGE SCALE GENOMIC DNA]</scope>
    <source>
        <strain>ATCC 43067 / DSM 2661 / JAL-1 / JCM 10045 / NBRC 100440</strain>
    </source>
</reference>
<sequence>MENYNDILEKMLNGEIKPYQLDKMFGSKIATEIRRKFIEKKVGIEFKHICNYSIDEEMAMKKNIENMIGAIQIPLGFAGPLKINGEYAKGEFYIPLATTEGALVASVNRGCSIITKCGGATVRVIDDKMTRAPCLKTKSVVDAIKVRDWIRENFERIKEVAESTTRHGKLIKIEPILIVGRNLYPRFVFKTGDAMGMNMVTIATEKACNFIEGELKKEGIFVKTVAVSGNACVDKKPSGMNLINGRGKSIVAEVFLTEKEVNKYLKTTSQAIAEVNRLKNYIGSAISNSMGFNAHYANIIGAIFLATGQDEAHIVEGSLGITMAEVEDDGLYFSVTLPDVPIGTVGGGTRVETQKECLEMLGCYGDNKALKFAEIVGAAVLAGELSLLGALAAGHLGKAHQELGR</sequence>
<keyword id="KW-0414">Isoprene biosynthesis</keyword>
<keyword id="KW-0521">NADP</keyword>
<keyword id="KW-0560">Oxidoreductase</keyword>
<keyword id="KW-1185">Reference proteome</keyword>
<dbReference type="EC" id="1.1.1.34"/>
<dbReference type="EMBL" id="L77117">
    <property type="protein sequence ID" value="AAB98699.1"/>
    <property type="molecule type" value="Genomic_DNA"/>
</dbReference>
<dbReference type="PIR" id="A64388">
    <property type="entry name" value="A64388"/>
</dbReference>
<dbReference type="RefSeq" id="WP_010870211.1">
    <property type="nucleotide sequence ID" value="NC_000909.1"/>
</dbReference>
<dbReference type="SMR" id="Q58116"/>
<dbReference type="FunCoup" id="Q58116">
    <property type="interactions" value="41"/>
</dbReference>
<dbReference type="STRING" id="243232.MJ_0705"/>
<dbReference type="PaxDb" id="243232-MJ_0705"/>
<dbReference type="EnsemblBacteria" id="AAB98699">
    <property type="protein sequence ID" value="AAB98699"/>
    <property type="gene ID" value="MJ_0705"/>
</dbReference>
<dbReference type="GeneID" id="1451573"/>
<dbReference type="KEGG" id="mja:MJ_0705"/>
<dbReference type="eggNOG" id="arCOG04260">
    <property type="taxonomic scope" value="Archaea"/>
</dbReference>
<dbReference type="HOGENOM" id="CLU_001734_2_2_2"/>
<dbReference type="InParanoid" id="Q58116"/>
<dbReference type="OrthoDB" id="10981at2157"/>
<dbReference type="PhylomeDB" id="Q58116"/>
<dbReference type="UniPathway" id="UPA00058">
    <property type="reaction ID" value="UER00103"/>
</dbReference>
<dbReference type="Proteomes" id="UP000000805">
    <property type="component" value="Chromosome"/>
</dbReference>
<dbReference type="GO" id="GO:0004420">
    <property type="term" value="F:hydroxymethylglutaryl-CoA reductase (NADPH) activity"/>
    <property type="evidence" value="ECO:0000318"/>
    <property type="project" value="GO_Central"/>
</dbReference>
<dbReference type="GO" id="GO:0015936">
    <property type="term" value="P:coenzyme A metabolic process"/>
    <property type="evidence" value="ECO:0007669"/>
    <property type="project" value="InterPro"/>
</dbReference>
<dbReference type="GO" id="GO:0008299">
    <property type="term" value="P:isoprenoid biosynthetic process"/>
    <property type="evidence" value="ECO:0000318"/>
    <property type="project" value="GO_Central"/>
</dbReference>
<dbReference type="GO" id="GO:0016126">
    <property type="term" value="P:sterol biosynthetic process"/>
    <property type="evidence" value="ECO:0000318"/>
    <property type="project" value="GO_Central"/>
</dbReference>
<dbReference type="CDD" id="cd00643">
    <property type="entry name" value="HMG-CoA_reductase_classI"/>
    <property type="match status" value="1"/>
</dbReference>
<dbReference type="FunFam" id="3.30.70.420:FF:000001">
    <property type="entry name" value="3-hydroxy-3-methylglutaryl coenzyme A reductase"/>
    <property type="match status" value="1"/>
</dbReference>
<dbReference type="Gene3D" id="3.90.770.10">
    <property type="entry name" value="3-hydroxy-3-methylglutaryl-coenzyme A Reductase, Chain A, domain 2"/>
    <property type="match status" value="1"/>
</dbReference>
<dbReference type="Gene3D" id="3.30.70.420">
    <property type="entry name" value="Hydroxymethylglutaryl-CoA reductase, class I/II, NAD/NADP-binding domain"/>
    <property type="match status" value="1"/>
</dbReference>
<dbReference type="InterPro" id="IPR002202">
    <property type="entry name" value="HMG_CoA_Rdtase"/>
</dbReference>
<dbReference type="InterPro" id="IPR023074">
    <property type="entry name" value="HMG_CoA_Rdtase_cat_sf"/>
</dbReference>
<dbReference type="InterPro" id="IPR023076">
    <property type="entry name" value="HMG_CoA_Rdtase_CS"/>
</dbReference>
<dbReference type="InterPro" id="IPR004554">
    <property type="entry name" value="HMG_CoA_Rdtase_eu_arc"/>
</dbReference>
<dbReference type="InterPro" id="IPR009023">
    <property type="entry name" value="HMG_CoA_Rdtase_NAD(P)-bd_sf"/>
</dbReference>
<dbReference type="InterPro" id="IPR009029">
    <property type="entry name" value="HMG_CoA_Rdtase_sub-bd_dom_sf"/>
</dbReference>
<dbReference type="NCBIfam" id="TIGR00533">
    <property type="entry name" value="HMG_CoA_R_NADP"/>
    <property type="match status" value="1"/>
</dbReference>
<dbReference type="PANTHER" id="PTHR10572">
    <property type="entry name" value="3-HYDROXY-3-METHYLGLUTARYL-COENZYME A REDUCTASE"/>
    <property type="match status" value="1"/>
</dbReference>
<dbReference type="PANTHER" id="PTHR10572:SF24">
    <property type="entry name" value="3-HYDROXY-3-METHYLGLUTARYL-COENZYME A REDUCTASE"/>
    <property type="match status" value="1"/>
</dbReference>
<dbReference type="Pfam" id="PF00368">
    <property type="entry name" value="HMG-CoA_red"/>
    <property type="match status" value="1"/>
</dbReference>
<dbReference type="PRINTS" id="PR00071">
    <property type="entry name" value="HMGCOARDTASE"/>
</dbReference>
<dbReference type="SUPFAM" id="SSF55035">
    <property type="entry name" value="NAD-binding domain of HMG-CoA reductase"/>
    <property type="match status" value="1"/>
</dbReference>
<dbReference type="SUPFAM" id="SSF56542">
    <property type="entry name" value="Substrate-binding domain of HMG-CoA reductase"/>
    <property type="match status" value="1"/>
</dbReference>
<dbReference type="PROSITE" id="PS00066">
    <property type="entry name" value="HMG_COA_REDUCTASE_1"/>
    <property type="match status" value="1"/>
</dbReference>
<dbReference type="PROSITE" id="PS00318">
    <property type="entry name" value="HMG_COA_REDUCTASE_2"/>
    <property type="match status" value="1"/>
</dbReference>
<dbReference type="PROSITE" id="PS50065">
    <property type="entry name" value="HMG_COA_REDUCTASE_4"/>
    <property type="match status" value="1"/>
</dbReference>
<organism>
    <name type="scientific">Methanocaldococcus jannaschii (strain ATCC 43067 / DSM 2661 / JAL-1 / JCM 10045 / NBRC 100440)</name>
    <name type="common">Methanococcus jannaschii</name>
    <dbReference type="NCBI Taxonomy" id="243232"/>
    <lineage>
        <taxon>Archaea</taxon>
        <taxon>Methanobacteriati</taxon>
        <taxon>Methanobacteriota</taxon>
        <taxon>Methanomada group</taxon>
        <taxon>Methanococci</taxon>
        <taxon>Methanococcales</taxon>
        <taxon>Methanocaldococcaceae</taxon>
        <taxon>Methanocaldococcus</taxon>
    </lineage>
</organism>
<feature type="chain" id="PRO_0000114461" description="3-hydroxy-3-methylglutaryl-coenzyme A reductase">
    <location>
        <begin position="1"/>
        <end position="405"/>
    </location>
</feature>
<feature type="active site" description="Charge relay system" evidence="1">
    <location>
        <position position="100"/>
    </location>
</feature>
<feature type="active site" description="Charge relay system" evidence="1">
    <location>
        <position position="310"/>
    </location>
</feature>
<feature type="active site" description="Proton donor" evidence="1">
    <location>
        <position position="400"/>
    </location>
</feature>
<comment type="function">
    <text evidence="1">Converts HMG-CoA to mevalonate.</text>
</comment>
<comment type="catalytic activity">
    <reaction>
        <text>(R)-mevalonate + 2 NADP(+) + CoA = (3S)-3-hydroxy-3-methylglutaryl-CoA + 2 NADPH + 2 H(+)</text>
        <dbReference type="Rhea" id="RHEA:15989"/>
        <dbReference type="ChEBI" id="CHEBI:15378"/>
        <dbReference type="ChEBI" id="CHEBI:36464"/>
        <dbReference type="ChEBI" id="CHEBI:43074"/>
        <dbReference type="ChEBI" id="CHEBI:57287"/>
        <dbReference type="ChEBI" id="CHEBI:57783"/>
        <dbReference type="ChEBI" id="CHEBI:58349"/>
        <dbReference type="EC" id="1.1.1.34"/>
    </reaction>
</comment>
<comment type="pathway">
    <text>Metabolic intermediate biosynthesis; (R)-mevalonate biosynthesis; (R)-mevalonate from acetyl-CoA: step 3/3.</text>
</comment>
<comment type="similarity">
    <text evidence="2">Belongs to the HMG-CoA reductase family.</text>
</comment>
<name>HMDH_METJA</name>
<evidence type="ECO:0000250" key="1"/>
<evidence type="ECO:0000305" key="2"/>